<sequence length="593" mass="67402">MDVAFPGMERHDEKNPPGDDGTKPTGGKKARPAIKIKWYWKGLILLVELCIGDYLLDRYVFGGVMLRTTIAYAVLARVGLDYKLHYGKDCWLARHPEEDLHHRNAQRVCTMLKWNGGLYLKAGQAVAMQGSVLPEEYQRMFGEMFDDAPHSSWSDVEKVIKQDFGGRSIEDVFGVAPSDQQGDSQFVFEREPRASASIAQVHYARLPDGRGLAVKVQRREISKQVSWDLWSMKLMTEYTAWVTGLPMGGMGQFVADRVMQETDFEHEASNSEKMADLIATDSSLRDRVYIPKVYREFTSKRVLTTEWVDAVQLWDRDAITGQVAPSRSATSDKPGLGLRLDDVMRTVVELFSAQMFSWGFVHCDPHPGNILVRQNPKRPDSAQVVLLDHGLYITMSDKLRRQYARFWKALVTNDDASLQRVSREWGMKSADAWADASLMRPYKNPSSSDDESGESWQRTKETPEERKQRMIDEAAAYLGDEGLFPRELLFLERNITIVQGNNRFLGSPVNRIKLIGSCALKAIRDDGQGKESIRERISTRVALLSLDLAFWWSAMKQYFGYGEGLEQELKEAEDRQLRETKDAVAELFGITVN</sequence>
<gene>
    <name evidence="3" type="primary">lcsO</name>
    <name type="ORF">VFPBJ_02529</name>
    <name type="ORF">VFPFJ_04701</name>
</gene>
<evidence type="ECO:0000256" key="1">
    <source>
        <dbReference type="SAM" id="MobiDB-lite"/>
    </source>
</evidence>
<evidence type="ECO:0000269" key="2">
    <source>
    </source>
</evidence>
<evidence type="ECO:0000303" key="3">
    <source>
    </source>
</evidence>
<evidence type="ECO:0000305" key="4"/>
<evidence type="ECO:0000305" key="5">
    <source>
    </source>
</evidence>
<accession>A0A179HKZ8</accession>
<name>LCSO_PURLI</name>
<dbReference type="EMBL" id="LSBH01000002">
    <property type="protein sequence ID" value="OAQ83762.1"/>
    <property type="molecule type" value="Genomic_DNA"/>
</dbReference>
<dbReference type="EMBL" id="LSBI01000004">
    <property type="protein sequence ID" value="OAQ90542.1"/>
    <property type="molecule type" value="Genomic_DNA"/>
</dbReference>
<dbReference type="RefSeq" id="XP_018179261.1">
    <property type="nucleotide sequence ID" value="XM_018321781.1"/>
</dbReference>
<dbReference type="SMR" id="A0A179HKZ8"/>
<dbReference type="STRING" id="33203.A0A179HKZ8"/>
<dbReference type="GeneID" id="28886830"/>
<dbReference type="KEGG" id="plj:28886830"/>
<dbReference type="OMA" id="LTSEWIH"/>
<dbReference type="OrthoDB" id="427480at2759"/>
<dbReference type="Proteomes" id="UP000078240">
    <property type="component" value="Unassembled WGS sequence"/>
</dbReference>
<dbReference type="Proteomes" id="UP000078340">
    <property type="component" value="Unassembled WGS sequence"/>
</dbReference>
<dbReference type="CDD" id="cd13969">
    <property type="entry name" value="ADCK1-like"/>
    <property type="match status" value="1"/>
</dbReference>
<dbReference type="InterPro" id="IPR004147">
    <property type="entry name" value="ABC1_dom"/>
</dbReference>
<dbReference type="InterPro" id="IPR045307">
    <property type="entry name" value="ADCK1_dom"/>
</dbReference>
<dbReference type="InterPro" id="IPR011009">
    <property type="entry name" value="Kinase-like_dom_sf"/>
</dbReference>
<dbReference type="InterPro" id="IPR051130">
    <property type="entry name" value="Mito_struct-func_regulator"/>
</dbReference>
<dbReference type="PANTHER" id="PTHR43173">
    <property type="entry name" value="ABC1 FAMILY PROTEIN"/>
    <property type="match status" value="1"/>
</dbReference>
<dbReference type="PANTHER" id="PTHR43173:SF37">
    <property type="entry name" value="ABC1 FAMILY PROTEIN C10F6.14C"/>
    <property type="match status" value="1"/>
</dbReference>
<dbReference type="Pfam" id="PF03109">
    <property type="entry name" value="ABC1"/>
    <property type="match status" value="1"/>
</dbReference>
<dbReference type="SUPFAM" id="SSF56112">
    <property type="entry name" value="Protein kinase-like (PK-like)"/>
    <property type="match status" value="1"/>
</dbReference>
<comment type="function">
    <text evidence="2 5">ABC1 family protein; part of the gene cluster that mediates the biosynthesis of the lipopeptide antibiotics leucinostatins that show extensive biological activities, including antimalarial, antiviral, antibacterial, antifungal, and antitumor activities, as well as phytotoxic (PubMed:27416025). The function of lcsO within the leucinostatins biosynthesis has not been identified yet (Probable).</text>
</comment>
<comment type="induction">
    <text evidence="2">Expression is positively regulated by the leucinostatins biosynthesis cluster-specific transcription regulator lcsF.</text>
</comment>
<comment type="similarity">
    <text evidence="4">Belongs to the protein kinase superfamily. ADCK protein kinase family.</text>
</comment>
<keyword id="KW-1185">Reference proteome</keyword>
<feature type="chain" id="PRO_0000446610" description="ABC1 family protein lscO">
    <location>
        <begin position="1"/>
        <end position="593"/>
    </location>
</feature>
<feature type="region of interest" description="Disordered" evidence="1">
    <location>
        <begin position="1"/>
        <end position="29"/>
    </location>
</feature>
<feature type="region of interest" description="Disordered" evidence="1">
    <location>
        <begin position="441"/>
        <end position="467"/>
    </location>
</feature>
<feature type="compositionally biased region" description="Basic and acidic residues" evidence="1">
    <location>
        <begin position="8"/>
        <end position="22"/>
    </location>
</feature>
<feature type="compositionally biased region" description="Basic and acidic residues" evidence="1">
    <location>
        <begin position="457"/>
        <end position="467"/>
    </location>
</feature>
<proteinExistence type="evidence at transcript level"/>
<organism>
    <name type="scientific">Purpureocillium lilacinum</name>
    <name type="common">Paecilomyces lilacinus</name>
    <dbReference type="NCBI Taxonomy" id="33203"/>
    <lineage>
        <taxon>Eukaryota</taxon>
        <taxon>Fungi</taxon>
        <taxon>Dikarya</taxon>
        <taxon>Ascomycota</taxon>
        <taxon>Pezizomycotina</taxon>
        <taxon>Sordariomycetes</taxon>
        <taxon>Hypocreomycetidae</taxon>
        <taxon>Hypocreales</taxon>
        <taxon>Ophiocordycipitaceae</taxon>
        <taxon>Purpureocillium</taxon>
    </lineage>
</organism>
<protein>
    <recommendedName>
        <fullName evidence="3">ABC1 family protein lscO</fullName>
    </recommendedName>
    <alternativeName>
        <fullName evidence="3">Leucinostatins biosynthesis cluster protein O</fullName>
    </alternativeName>
</protein>
<reference key="1">
    <citation type="journal article" date="2016" name="PLoS Pathog.">
        <title>Biosynthesis of antibiotic leucinostatins in bio-control fungus Purpureocillium lilacinum and their inhibition on phytophthora revealed by genome mining.</title>
        <authorList>
            <person name="Wang G."/>
            <person name="Liu Z."/>
            <person name="Lin R."/>
            <person name="Li E."/>
            <person name="Mao Z."/>
            <person name="Ling J."/>
            <person name="Yang Y."/>
            <person name="Yin W.B."/>
            <person name="Xie B."/>
        </authorList>
    </citation>
    <scope>NUCLEOTIDE SEQUENCE [LARGE SCALE GENOMIC DNA]</scope>
    <scope>IDENTIFICATION</scope>
    <scope>FUNCTION</scope>
    <scope>INDUCTION</scope>
    <source>
        <strain>PLBJ-1</strain>
    </source>
</reference>